<dbReference type="EC" id="1.13.11.12"/>
<dbReference type="EMBL" id="U56406">
    <property type="protein sequence ID" value="AAC12951.1"/>
    <property type="molecule type" value="mRNA"/>
</dbReference>
<dbReference type="PIR" id="T06190">
    <property type="entry name" value="T06190"/>
</dbReference>
<dbReference type="SMR" id="P93184"/>
<dbReference type="BRENDA" id="1.13.11.12">
    <property type="organism ID" value="2687"/>
</dbReference>
<dbReference type="BRENDA" id="1.13.11.33">
    <property type="organism ID" value="2687"/>
</dbReference>
<dbReference type="UniPathway" id="UPA00382"/>
<dbReference type="ExpressionAtlas" id="P93184">
    <property type="expression patterns" value="baseline and differential"/>
</dbReference>
<dbReference type="GO" id="GO:0009507">
    <property type="term" value="C:chloroplast"/>
    <property type="evidence" value="ECO:0007669"/>
    <property type="project" value="UniProtKB-SubCell"/>
</dbReference>
<dbReference type="GO" id="GO:0016165">
    <property type="term" value="F:linoleate 13S-lipoxygenase activity"/>
    <property type="evidence" value="ECO:0000314"/>
    <property type="project" value="CACAO"/>
</dbReference>
<dbReference type="GO" id="GO:0046872">
    <property type="term" value="F:metal ion binding"/>
    <property type="evidence" value="ECO:0007669"/>
    <property type="project" value="UniProtKB-KW"/>
</dbReference>
<dbReference type="GO" id="GO:0006633">
    <property type="term" value="P:fatty acid biosynthetic process"/>
    <property type="evidence" value="ECO:0007669"/>
    <property type="project" value="UniProtKB-KW"/>
</dbReference>
<dbReference type="GO" id="GO:0034440">
    <property type="term" value="P:lipid oxidation"/>
    <property type="evidence" value="ECO:0007669"/>
    <property type="project" value="InterPro"/>
</dbReference>
<dbReference type="GO" id="GO:0031408">
    <property type="term" value="P:oxylipin biosynthetic process"/>
    <property type="evidence" value="ECO:0007669"/>
    <property type="project" value="UniProtKB-UniPathway"/>
</dbReference>
<dbReference type="GO" id="GO:0009753">
    <property type="term" value="P:response to jasmonic acid"/>
    <property type="evidence" value="ECO:0000314"/>
    <property type="project" value="CACAO"/>
</dbReference>
<dbReference type="CDD" id="cd01751">
    <property type="entry name" value="PLAT_LH2"/>
    <property type="match status" value="1"/>
</dbReference>
<dbReference type="FunFam" id="1.20.245.10:FF:000002">
    <property type="entry name" value="Lipoxygenase"/>
    <property type="match status" value="1"/>
</dbReference>
<dbReference type="FunFam" id="3.10.450.60:FF:000005">
    <property type="entry name" value="Lipoxygenase"/>
    <property type="match status" value="1"/>
</dbReference>
<dbReference type="FunFam" id="4.10.372.10:FF:000003">
    <property type="entry name" value="Lipoxygenase"/>
    <property type="match status" value="1"/>
</dbReference>
<dbReference type="FunFam" id="4.10.375.10:FF:000003">
    <property type="entry name" value="Lipoxygenase"/>
    <property type="match status" value="1"/>
</dbReference>
<dbReference type="Gene3D" id="3.10.450.60">
    <property type="match status" value="1"/>
</dbReference>
<dbReference type="Gene3D" id="4.10.375.10">
    <property type="entry name" value="Lipoxygenase-1, Domain 2"/>
    <property type="match status" value="1"/>
</dbReference>
<dbReference type="Gene3D" id="4.10.372.10">
    <property type="entry name" value="Lipoxygenase-1, Domain 3"/>
    <property type="match status" value="1"/>
</dbReference>
<dbReference type="Gene3D" id="1.20.245.10">
    <property type="entry name" value="Lipoxygenase-1, Domain 5"/>
    <property type="match status" value="1"/>
</dbReference>
<dbReference type="Gene3D" id="2.60.60.20">
    <property type="entry name" value="PLAT/LH2 domain"/>
    <property type="match status" value="1"/>
</dbReference>
<dbReference type="InterPro" id="IPR000907">
    <property type="entry name" value="LipOase"/>
</dbReference>
<dbReference type="InterPro" id="IPR013819">
    <property type="entry name" value="LipOase_C"/>
</dbReference>
<dbReference type="InterPro" id="IPR036226">
    <property type="entry name" value="LipOase_C_sf"/>
</dbReference>
<dbReference type="InterPro" id="IPR020834">
    <property type="entry name" value="LipOase_CS"/>
</dbReference>
<dbReference type="InterPro" id="IPR020833">
    <property type="entry name" value="LipOase_Fe_BS"/>
</dbReference>
<dbReference type="InterPro" id="IPR001246">
    <property type="entry name" value="LipOase_plant"/>
</dbReference>
<dbReference type="InterPro" id="IPR042057">
    <property type="entry name" value="Lipoxy_PLAT/LH2"/>
</dbReference>
<dbReference type="InterPro" id="IPR027433">
    <property type="entry name" value="Lipoxygenase_dom_3"/>
</dbReference>
<dbReference type="InterPro" id="IPR001024">
    <property type="entry name" value="PLAT/LH2_dom"/>
</dbReference>
<dbReference type="InterPro" id="IPR036392">
    <property type="entry name" value="PLAT/LH2_dom_sf"/>
</dbReference>
<dbReference type="PANTHER" id="PTHR11771">
    <property type="entry name" value="LIPOXYGENASE"/>
    <property type="match status" value="1"/>
</dbReference>
<dbReference type="Pfam" id="PF00305">
    <property type="entry name" value="Lipoxygenase"/>
    <property type="match status" value="1"/>
</dbReference>
<dbReference type="Pfam" id="PF01477">
    <property type="entry name" value="PLAT"/>
    <property type="match status" value="1"/>
</dbReference>
<dbReference type="PRINTS" id="PR00087">
    <property type="entry name" value="LIPOXYGENASE"/>
</dbReference>
<dbReference type="PRINTS" id="PR00468">
    <property type="entry name" value="PLTLPOXGNASE"/>
</dbReference>
<dbReference type="SMART" id="SM00308">
    <property type="entry name" value="LH2"/>
    <property type="match status" value="1"/>
</dbReference>
<dbReference type="SUPFAM" id="SSF49723">
    <property type="entry name" value="Lipase/lipooxygenase domain (PLAT/LH2 domain)"/>
    <property type="match status" value="1"/>
</dbReference>
<dbReference type="SUPFAM" id="SSF48484">
    <property type="entry name" value="Lipoxigenase"/>
    <property type="match status" value="1"/>
</dbReference>
<dbReference type="PROSITE" id="PS00711">
    <property type="entry name" value="LIPOXYGENASE_1"/>
    <property type="match status" value="1"/>
</dbReference>
<dbReference type="PROSITE" id="PS00081">
    <property type="entry name" value="LIPOXYGENASE_2"/>
    <property type="match status" value="1"/>
</dbReference>
<dbReference type="PROSITE" id="PS51393">
    <property type="entry name" value="LIPOXYGENASE_3"/>
    <property type="match status" value="1"/>
</dbReference>
<dbReference type="PROSITE" id="PS50095">
    <property type="entry name" value="PLAT"/>
    <property type="match status" value="1"/>
</dbReference>
<evidence type="ECO:0000255" key="1"/>
<evidence type="ECO:0000255" key="2">
    <source>
        <dbReference type="PROSITE-ProRule" id="PRU00152"/>
    </source>
</evidence>
<evidence type="ECO:0000255" key="3">
    <source>
        <dbReference type="PROSITE-ProRule" id="PRU00726"/>
    </source>
</evidence>
<evidence type="ECO:0000256" key="4">
    <source>
        <dbReference type="SAM" id="MobiDB-lite"/>
    </source>
</evidence>
<evidence type="ECO:0000269" key="5">
    <source>
    </source>
</evidence>
<evidence type="ECO:0000305" key="6"/>
<name>LOX21_HORVU</name>
<accession>P93184</accession>
<keyword id="KW-0150">Chloroplast</keyword>
<keyword id="KW-0223">Dioxygenase</keyword>
<keyword id="KW-0903">Direct protein sequencing</keyword>
<keyword id="KW-0275">Fatty acid biosynthesis</keyword>
<keyword id="KW-0276">Fatty acid metabolism</keyword>
<keyword id="KW-0408">Iron</keyword>
<keyword id="KW-0444">Lipid biosynthesis</keyword>
<keyword id="KW-0443">Lipid metabolism</keyword>
<keyword id="KW-0479">Metal-binding</keyword>
<keyword id="KW-0560">Oxidoreductase</keyword>
<keyword id="KW-0925">Oxylipin biosynthesis</keyword>
<keyword id="KW-0934">Plastid</keyword>
<keyword id="KW-0809">Transit peptide</keyword>
<proteinExistence type="evidence at protein level"/>
<sequence length="936" mass="105864">MLTATKPLVGGACAAPSSSARRRTFVVPEARRKPGNGRRTSVSKVGSTSTSTTTTTTTTLSADSNGAAVGTVTRPDVHVQDRTHATEMKATVTVHMSKAAGVRDFLYDLILKTWLHVDLVSSELDPQTGQEREPISGAVKHSGRVDDEWDMYEATFKVPASFGPIGAVQVTNYHHSEMLLGDIEVFPTGQEESAVTFHCKSWIDPSHCTPDKRVFFPAHSYLPSQTPKGVEGLRKRELEILRGTGCGERKEHDRIYDYDVYNDLGNPDDDNNPTTRPVLGGKEHPYPRRCRTGRPRSKKDPFSEERSHKEHIYVPRDEAFTERKMGAFDTKKFMSQLHALTTGLKTAKHKSQSFPSLSAIDQLYDDNFRNQPVQPEGGKLRFVIDLLETELLHLFKLEGAAFLEGIRRVFKFETPEIHDRDKFAWFRDEEFARQTIAGMNPMSIQLVTEFPIKSNLDEATYGPADSLITKEVVEEQIRRVMTADEAVQNKKLFMLDYHDLLLPYVHKVRKLDGTTLYGSRALFFLTADGTLRPIAIELTRPKSKKKPQWRQVFTPGCDGSVTGSWLWQLAKAHILAHDAGVHQLVSHWLRTHACTEPYIIAANRQLSQMHPVYRLLHPHFRFTMEINAQARAMLINAGGIIEGSFVPGEYSLELSSVAYDQQWRFDMEALPEDLIRRGMAVRNPNGELELAIEDYPYANDGLLVWDAIKQWALTYVQHYYPCAADIVDDEELQAWWTEVRTKGHADKQDEPWWPELDSHENLAQTLATIMWVTSGHHAAVNFGQYPMAGYIPNRPTMARRNMPTEIGGDDMRDFVEAPEKVLLDTFPSQYQSAIVLAILDLLSTHSSDEEYMGTHEEPAWTKDGVINQAFEEFKESTRKIVEQVDEWNNDPDRKNRHGAGMVPYVLLRPSDGDPTDGDPTDEKMVMEMGIPNSISI</sequence>
<reference key="1">
    <citation type="journal article" date="1998" name="Eur. J. Biochem.">
        <title>Characterization of a methyljasmonate-inducible lipoxygenase from barley (Hordeum vulgare cv. Salome) leaves.</title>
        <authorList>
            <person name="Voeroes K."/>
            <person name="Feussner I."/>
            <person name="Kuehn H."/>
            <person name="Lee J."/>
            <person name="Graner A."/>
            <person name="Loebler M."/>
            <person name="Parthier B."/>
            <person name="Wasternack C."/>
        </authorList>
    </citation>
    <scope>NUCLEOTIDE SEQUENCE [MRNA]</scope>
    <scope>PROTEIN SEQUENCE OF 213-227</scope>
    <scope>CATALYTIC ACTIVITY</scope>
    <scope>FUNCTION</scope>
    <scope>INDUCTION</scope>
    <source>
        <strain>cv. Salome</strain>
        <tissue>Leaf</tissue>
    </source>
</reference>
<protein>
    <recommendedName>
        <fullName>Lipoxygenase 2.1, chloroplastic</fullName>
        <ecNumber>1.13.11.12</ecNumber>
    </recommendedName>
    <alternativeName>
        <fullName>LOX-100</fullName>
    </alternativeName>
    <alternativeName>
        <fullName>LOX2:Hv:1</fullName>
    </alternativeName>
</protein>
<organism>
    <name type="scientific">Hordeum vulgare</name>
    <name type="common">Barley</name>
    <dbReference type="NCBI Taxonomy" id="4513"/>
    <lineage>
        <taxon>Eukaryota</taxon>
        <taxon>Viridiplantae</taxon>
        <taxon>Streptophyta</taxon>
        <taxon>Embryophyta</taxon>
        <taxon>Tracheophyta</taxon>
        <taxon>Spermatophyta</taxon>
        <taxon>Magnoliopsida</taxon>
        <taxon>Liliopsida</taxon>
        <taxon>Poales</taxon>
        <taxon>Poaceae</taxon>
        <taxon>BOP clade</taxon>
        <taxon>Pooideae</taxon>
        <taxon>Triticodae</taxon>
        <taxon>Triticeae</taxon>
        <taxon>Hordeinae</taxon>
        <taxon>Hordeum</taxon>
    </lineage>
</organism>
<gene>
    <name type="primary">LOX2.1</name>
</gene>
<comment type="function">
    <text evidence="5">Plant lipoxygenase may be involved in a number of diverse aspects of plant physiology including growth and development, pest resistance, and senescence or responses to wounding. This enzyme is possibly involved in jasmonic acid synthesis. It exhibits linoleate 13-lipoxygenase and arachidonate 15-lipoxygenase activity.</text>
</comment>
<comment type="catalytic activity">
    <reaction evidence="5">
        <text>(9Z,12Z)-octadecadienoate + O2 = (13S)-hydroperoxy-(9Z,11E)-octadecadienoate</text>
        <dbReference type="Rhea" id="RHEA:22780"/>
        <dbReference type="ChEBI" id="CHEBI:15379"/>
        <dbReference type="ChEBI" id="CHEBI:30245"/>
        <dbReference type="ChEBI" id="CHEBI:57466"/>
        <dbReference type="EC" id="1.13.11.12"/>
    </reaction>
</comment>
<comment type="catalytic activity">
    <reaction evidence="5">
        <text>(9Z,12Z,15Z)-octadecatrienoate + O2 = (13S)-hydroperoxy-(9Z,11E,15Z)-octadecatrienoate</text>
        <dbReference type="Rhea" id="RHEA:34495"/>
        <dbReference type="ChEBI" id="CHEBI:15379"/>
        <dbReference type="ChEBI" id="CHEBI:32387"/>
        <dbReference type="ChEBI" id="CHEBI:58757"/>
        <dbReference type="EC" id="1.13.11.12"/>
    </reaction>
</comment>
<comment type="cofactor">
    <cofactor evidence="3">
        <name>Fe cation</name>
        <dbReference type="ChEBI" id="CHEBI:24875"/>
    </cofactor>
    <text evidence="3">Binds 1 Fe cation per subunit. Iron is tightly bound.</text>
</comment>
<comment type="biophysicochemical properties">
    <phDependence>
        <text>Optimum pH is 7.</text>
    </phDependence>
</comment>
<comment type="pathway">
    <text evidence="3">Lipid metabolism; oxylipin biosynthesis.</text>
</comment>
<comment type="subcellular location">
    <subcellularLocation>
        <location>Plastid</location>
        <location>Chloroplast</location>
    </subcellularLocation>
</comment>
<comment type="induction">
    <text evidence="5">Transient induction by exogenous methyl jasmonate, reaching a maximum 48 hours after treatment. Not induced by endogenous jasmonic acid resulting from sorbitol stress.</text>
</comment>
<comment type="PTM">
    <text>The N-terminus is blocked.</text>
</comment>
<comment type="similarity">
    <text evidence="6">Belongs to the lipoxygenase family.</text>
</comment>
<feature type="transit peptide" description="Chloroplast" evidence="1">
    <location>
        <begin position="1"/>
        <end status="unknown"/>
    </location>
</feature>
<feature type="chain" id="PRO_0000018323" description="Lipoxygenase 2.1, chloroplastic">
    <location>
        <begin status="unknown"/>
        <end position="936"/>
    </location>
</feature>
<feature type="domain" description="PLAT" evidence="2">
    <location>
        <begin position="88"/>
        <end position="217"/>
    </location>
</feature>
<feature type="domain" description="Lipoxygenase" evidence="3">
    <location>
        <begin position="220"/>
        <end position="936"/>
    </location>
</feature>
<feature type="region of interest" description="Disordered" evidence="4">
    <location>
        <begin position="1"/>
        <end position="69"/>
    </location>
</feature>
<feature type="region of interest" description="Disordered" evidence="4">
    <location>
        <begin position="264"/>
        <end position="308"/>
    </location>
</feature>
<feature type="compositionally biased region" description="Low complexity" evidence="4">
    <location>
        <begin position="47"/>
        <end position="59"/>
    </location>
</feature>
<feature type="compositionally biased region" description="Basic residues" evidence="4">
    <location>
        <begin position="287"/>
        <end position="297"/>
    </location>
</feature>
<feature type="compositionally biased region" description="Basic and acidic residues" evidence="4">
    <location>
        <begin position="298"/>
        <end position="308"/>
    </location>
</feature>
<feature type="binding site" evidence="3">
    <location>
        <position position="587"/>
    </location>
    <ligand>
        <name>Fe cation</name>
        <dbReference type="ChEBI" id="CHEBI:24875"/>
        <note>catalytic</note>
    </ligand>
</feature>
<feature type="binding site" evidence="3">
    <location>
        <position position="592"/>
    </location>
    <ligand>
        <name>Fe cation</name>
        <dbReference type="ChEBI" id="CHEBI:24875"/>
        <note>catalytic</note>
    </ligand>
</feature>
<feature type="binding site" evidence="3">
    <location>
        <position position="777"/>
    </location>
    <ligand>
        <name>Fe cation</name>
        <dbReference type="ChEBI" id="CHEBI:24875"/>
        <note>catalytic</note>
    </ligand>
</feature>
<feature type="binding site" evidence="3">
    <location>
        <position position="781"/>
    </location>
    <ligand>
        <name>Fe cation</name>
        <dbReference type="ChEBI" id="CHEBI:24875"/>
        <note>catalytic</note>
    </ligand>
</feature>
<feature type="binding site" evidence="3">
    <location>
        <position position="936"/>
    </location>
    <ligand>
        <name>Fe cation</name>
        <dbReference type="ChEBI" id="CHEBI:24875"/>
        <note>catalytic</note>
    </ligand>
</feature>